<proteinExistence type="inferred from homology"/>
<reference key="1">
    <citation type="journal article" date="2007" name="BMC Genomics">
        <title>The chloroplast genome sequence of the green alga Leptosira terrestris: multiple losses of the inverted repeat and extensive genome rearrangements within the Trebouxiophyceae.</title>
        <authorList>
            <person name="de Cambiaire J.-C."/>
            <person name="Otis C."/>
            <person name="Turmel M."/>
            <person name="Lemieux C."/>
        </authorList>
    </citation>
    <scope>NUCLEOTIDE SEQUENCE [LARGE SCALE GENOMIC DNA]</scope>
    <source>
        <strain>CCAP 463/2 / UTEX 333</strain>
    </source>
</reference>
<sequence>MTTFFISKVNGPVNKSLIWLKIHIYEFFLLKFMLLFPPTVCSTNPDCFKSNRIVNCFLDESPYFFRWVGFSLQKTQVAKIILCLIAVICCELSLTSNQINTSQAYPIFAQQNYENPREATGRIVCANCHLAQKPVELSLPQAVMPDTVFEAVVKIPYDQEIQQVLGNGKKGGLNVGAVLILPEGFSLAPPDRIPEEMKNKVGKLYFQSYNPEKPNILVIGPVPGKTYNEMVFPILSPNPETNKNISYLKYPIYLGGNRGRGQIYPDGSKSNNTVYNASTGGTIVDITPASKKGGYNLTIETANGEQIVDKIPPGPELIVSVGQSIKPDQALTNNPNVGGFGQQDGEIVLQNPVRLQALIVFFIFVILTQLFLVLKKKQFEKVQLAEMNF</sequence>
<protein>
    <recommendedName>
        <fullName evidence="2">Cytochrome f</fullName>
    </recommendedName>
</protein>
<dbReference type="EMBL" id="EF506945">
    <property type="protein sequence ID" value="ABO69289.1"/>
    <property type="molecule type" value="Genomic_DNA"/>
</dbReference>
<dbReference type="RefSeq" id="YP_001382145.2">
    <property type="nucleotide sequence ID" value="NC_009681.1"/>
</dbReference>
<dbReference type="SMR" id="A6YG68"/>
<dbReference type="GeneID" id="5383790"/>
<dbReference type="GO" id="GO:0009535">
    <property type="term" value="C:chloroplast thylakoid membrane"/>
    <property type="evidence" value="ECO:0007669"/>
    <property type="project" value="UniProtKB-SubCell"/>
</dbReference>
<dbReference type="GO" id="GO:0009055">
    <property type="term" value="F:electron transfer activity"/>
    <property type="evidence" value="ECO:0007669"/>
    <property type="project" value="UniProtKB-UniRule"/>
</dbReference>
<dbReference type="GO" id="GO:0020037">
    <property type="term" value="F:heme binding"/>
    <property type="evidence" value="ECO:0007669"/>
    <property type="project" value="InterPro"/>
</dbReference>
<dbReference type="GO" id="GO:0005506">
    <property type="term" value="F:iron ion binding"/>
    <property type="evidence" value="ECO:0007669"/>
    <property type="project" value="InterPro"/>
</dbReference>
<dbReference type="GO" id="GO:0015979">
    <property type="term" value="P:photosynthesis"/>
    <property type="evidence" value="ECO:0007669"/>
    <property type="project" value="UniProtKB-UniRule"/>
</dbReference>
<dbReference type="FunFam" id="1.20.5.700:FF:000001">
    <property type="entry name" value="Cytochrome f"/>
    <property type="match status" value="1"/>
</dbReference>
<dbReference type="FunFam" id="2.60.40.830:FF:000001">
    <property type="entry name" value="Cytochrome f"/>
    <property type="match status" value="1"/>
</dbReference>
<dbReference type="Gene3D" id="2.40.50.100">
    <property type="match status" value="1"/>
</dbReference>
<dbReference type="Gene3D" id="2.60.40.830">
    <property type="entry name" value="Cytochrome f large domain"/>
    <property type="match status" value="1"/>
</dbReference>
<dbReference type="Gene3D" id="1.20.5.700">
    <property type="entry name" value="Single helix bin"/>
    <property type="match status" value="1"/>
</dbReference>
<dbReference type="HAMAP" id="MF_00610">
    <property type="entry name" value="Cytb6_f_cytF"/>
    <property type="match status" value="1"/>
</dbReference>
<dbReference type="InterPro" id="IPR024058">
    <property type="entry name" value="Cyt-f_TM"/>
</dbReference>
<dbReference type="InterPro" id="IPR002325">
    <property type="entry name" value="Cyt_f"/>
</dbReference>
<dbReference type="InterPro" id="IPR024094">
    <property type="entry name" value="Cyt_f_lg_dom"/>
</dbReference>
<dbReference type="InterPro" id="IPR036826">
    <property type="entry name" value="Cyt_f_lg_dom_sf"/>
</dbReference>
<dbReference type="InterPro" id="IPR011054">
    <property type="entry name" value="Rudment_hybrid_motif"/>
</dbReference>
<dbReference type="PANTHER" id="PTHR33288">
    <property type="match status" value="1"/>
</dbReference>
<dbReference type="PANTHER" id="PTHR33288:SF10">
    <property type="entry name" value="CYTOCHROME F"/>
    <property type="match status" value="1"/>
</dbReference>
<dbReference type="Pfam" id="PF01333">
    <property type="entry name" value="Apocytochr_F_C"/>
    <property type="match status" value="1"/>
</dbReference>
<dbReference type="Pfam" id="PF16639">
    <property type="entry name" value="Apocytochr_F_N"/>
    <property type="match status" value="1"/>
</dbReference>
<dbReference type="PRINTS" id="PR00610">
    <property type="entry name" value="CYTOCHROMEF"/>
</dbReference>
<dbReference type="SUPFAM" id="SSF103431">
    <property type="entry name" value="Cytochrome f subunit of the cytochrome b6f complex, transmembrane anchor"/>
    <property type="match status" value="1"/>
</dbReference>
<dbReference type="SUPFAM" id="SSF49441">
    <property type="entry name" value="Cytochrome f, large domain"/>
    <property type="match status" value="1"/>
</dbReference>
<dbReference type="SUPFAM" id="SSF51246">
    <property type="entry name" value="Rudiment single hybrid motif"/>
    <property type="match status" value="1"/>
</dbReference>
<dbReference type="PROSITE" id="PS51010">
    <property type="entry name" value="CYTF"/>
    <property type="match status" value="1"/>
</dbReference>
<organism>
    <name type="scientific">Pleurastrum terricola</name>
    <name type="common">Filamentous green alga</name>
    <name type="synonym">Leptosira terrestris</name>
    <dbReference type="NCBI Taxonomy" id="34116"/>
    <lineage>
        <taxon>Eukaryota</taxon>
        <taxon>Viridiplantae</taxon>
        <taxon>Chlorophyta</taxon>
        <taxon>core chlorophytes</taxon>
        <taxon>Chlorophyceae</taxon>
        <taxon>CS clade</taxon>
        <taxon>Chlamydomonadales</taxon>
        <taxon>Pleurastraceae</taxon>
        <taxon>Pleurastrum</taxon>
    </lineage>
</organism>
<accession>A6YG68</accession>
<comment type="function">
    <text evidence="2">Component of the cytochrome b6-f complex, which mediates electron transfer between photosystem II (PSII) and photosystem I (PSI), cyclic electron flow around PSI, and state transitions.</text>
</comment>
<comment type="cofactor">
    <cofactor evidence="2">
        <name>heme</name>
        <dbReference type="ChEBI" id="CHEBI:30413"/>
    </cofactor>
    <text evidence="2">Binds 1 heme group covalently.</text>
</comment>
<comment type="subunit">
    <text evidence="1">The 4 large subunits of the cytochrome b6-f complex are cytochrome b6, subunit IV (17 kDa polypeptide, petD), cytochrome f and the Rieske protein, while the 4 small subunits are PetG, PetL, PetM and PetN. The complex functions as a dimer (By similarity).</text>
</comment>
<comment type="subcellular location">
    <subcellularLocation>
        <location evidence="2">Plastid</location>
        <location evidence="2">Chloroplast thylakoid membrane</location>
        <topology evidence="2">Single-pass membrane protein</topology>
    </subcellularLocation>
</comment>
<comment type="similarity">
    <text evidence="2">Belongs to the cytochrome f family.</text>
</comment>
<keyword id="KW-0150">Chloroplast</keyword>
<keyword id="KW-0249">Electron transport</keyword>
<keyword id="KW-0349">Heme</keyword>
<keyword id="KW-0408">Iron</keyword>
<keyword id="KW-0472">Membrane</keyword>
<keyword id="KW-0479">Metal-binding</keyword>
<keyword id="KW-0602">Photosynthesis</keyword>
<keyword id="KW-0934">Plastid</keyword>
<keyword id="KW-0732">Signal</keyword>
<keyword id="KW-0793">Thylakoid</keyword>
<keyword id="KW-0812">Transmembrane</keyword>
<keyword id="KW-1133">Transmembrane helix</keyword>
<keyword id="KW-0813">Transport</keyword>
<name>CYF_PLETE</name>
<geneLocation type="chloroplast"/>
<feature type="signal peptide" evidence="2">
    <location>
        <begin position="1"/>
        <end position="42"/>
    </location>
</feature>
<feature type="chain" id="PRO_0000342069" description="Cytochrome f">
    <location>
        <begin position="43"/>
        <end position="389"/>
    </location>
</feature>
<feature type="transmembrane region" description="Helical" evidence="2">
    <location>
        <begin position="355"/>
        <end position="375"/>
    </location>
</feature>
<feature type="binding site" description="axial binding residue" evidence="2">
    <location>
        <position position="105"/>
    </location>
    <ligand>
        <name>heme</name>
        <dbReference type="ChEBI" id="CHEBI:30413"/>
    </ligand>
    <ligandPart>
        <name>Fe</name>
        <dbReference type="ChEBI" id="CHEBI:18248"/>
    </ligandPart>
</feature>
<feature type="binding site" description="covalent" evidence="2">
    <location>
        <position position="125"/>
    </location>
    <ligand>
        <name>heme</name>
        <dbReference type="ChEBI" id="CHEBI:30413"/>
    </ligand>
</feature>
<feature type="binding site" description="covalent" evidence="2">
    <location>
        <position position="128"/>
    </location>
    <ligand>
        <name>heme</name>
        <dbReference type="ChEBI" id="CHEBI:30413"/>
    </ligand>
</feature>
<feature type="binding site" description="axial binding residue" evidence="2">
    <location>
        <position position="129"/>
    </location>
    <ligand>
        <name>heme</name>
        <dbReference type="ChEBI" id="CHEBI:30413"/>
    </ligand>
    <ligandPart>
        <name>Fe</name>
        <dbReference type="ChEBI" id="CHEBI:18248"/>
    </ligandPart>
</feature>
<evidence type="ECO:0000250" key="1"/>
<evidence type="ECO:0000255" key="2">
    <source>
        <dbReference type="HAMAP-Rule" id="MF_00610"/>
    </source>
</evidence>
<gene>
    <name evidence="2" type="primary">petA</name>
</gene>